<accession>O07558</accession>
<accession>Q796S8</accession>
<feature type="chain" id="PRO_0000375819" description="Uncharacterized protein YhjD">
    <location>
        <begin position="1"/>
        <end position="120"/>
    </location>
</feature>
<feature type="coiled-coil region" evidence="1">
    <location>
        <begin position="45"/>
        <end position="78"/>
    </location>
</feature>
<dbReference type="EMBL" id="Y14081">
    <property type="protein sequence ID" value="CAA74466.1"/>
    <property type="molecule type" value="Genomic_DNA"/>
</dbReference>
<dbReference type="EMBL" id="AL009126">
    <property type="protein sequence ID" value="CAB12887.1"/>
    <property type="molecule type" value="Genomic_DNA"/>
</dbReference>
<dbReference type="PIR" id="D69833">
    <property type="entry name" value="D69833"/>
</dbReference>
<dbReference type="RefSeq" id="NP_388928.1">
    <property type="nucleotide sequence ID" value="NC_000964.3"/>
</dbReference>
<dbReference type="RefSeq" id="WP_003233132.1">
    <property type="nucleotide sequence ID" value="NZ_OZ025638.1"/>
</dbReference>
<dbReference type="FunCoup" id="O07558">
    <property type="interactions" value="79"/>
</dbReference>
<dbReference type="STRING" id="224308.BSU10470"/>
<dbReference type="PaxDb" id="224308-BSU10470"/>
<dbReference type="EnsemblBacteria" id="CAB12887">
    <property type="protein sequence ID" value="CAB12887"/>
    <property type="gene ID" value="BSU_10470"/>
</dbReference>
<dbReference type="GeneID" id="936334"/>
<dbReference type="KEGG" id="bsu:BSU10470"/>
<dbReference type="PATRIC" id="fig|224308.179.peg.1126"/>
<dbReference type="eggNOG" id="ENOG5031J3N">
    <property type="taxonomic scope" value="Bacteria"/>
</dbReference>
<dbReference type="InParanoid" id="O07558"/>
<dbReference type="OrthoDB" id="2988956at2"/>
<dbReference type="BioCyc" id="BSUB:BSU10470-MONOMER"/>
<dbReference type="Proteomes" id="UP000001570">
    <property type="component" value="Chromosome"/>
</dbReference>
<keyword id="KW-0175">Coiled coil</keyword>
<keyword id="KW-1185">Reference proteome</keyword>
<proteinExistence type="predicted"/>
<gene>
    <name type="primary">yhjD</name>
    <name type="ordered locus">BSU10470</name>
</gene>
<organism>
    <name type="scientific">Bacillus subtilis (strain 168)</name>
    <dbReference type="NCBI Taxonomy" id="224308"/>
    <lineage>
        <taxon>Bacteria</taxon>
        <taxon>Bacillati</taxon>
        <taxon>Bacillota</taxon>
        <taxon>Bacilli</taxon>
        <taxon>Bacillales</taxon>
        <taxon>Bacillaceae</taxon>
        <taxon>Bacillus</taxon>
    </lineage>
</organism>
<protein>
    <recommendedName>
        <fullName>Uncharacterized protein YhjD</fullName>
    </recommendedName>
</protein>
<evidence type="ECO:0000255" key="1"/>
<sequence length="120" mass="14456">MPNLQEEIYDLIERALFLPMAITIFNRDLAGIEESTLKLKHPYKQLISESLKIAQKDLMEVRKELRKRKIAIRETERDEAFTLYTFVIDGYEENHRYFNPRIREQVSELLTYYLFAPDRL</sequence>
<name>YHJD_BACSU</name>
<reference key="1">
    <citation type="journal article" date="1998" name="Microbiology">
        <title>The 172 kb prkA-addAB region from 83 degrees to 97 degrees of the Bacillus subtilis chromosome contains several dysfunctional genes, the glyB marker, many genes encoding transporter proteins, and the ubiquitous hit gene.</title>
        <authorList>
            <person name="Noback M.A."/>
            <person name="Holsappel S."/>
            <person name="Kiewiet R."/>
            <person name="Terpstra P."/>
            <person name="Wambutt R."/>
            <person name="Wedler H."/>
            <person name="Venema G."/>
            <person name="Bron S."/>
        </authorList>
    </citation>
    <scope>NUCLEOTIDE SEQUENCE [GENOMIC DNA]</scope>
    <source>
        <strain>168</strain>
    </source>
</reference>
<reference key="2">
    <citation type="journal article" date="1997" name="Nature">
        <title>The complete genome sequence of the Gram-positive bacterium Bacillus subtilis.</title>
        <authorList>
            <person name="Kunst F."/>
            <person name="Ogasawara N."/>
            <person name="Moszer I."/>
            <person name="Albertini A.M."/>
            <person name="Alloni G."/>
            <person name="Azevedo V."/>
            <person name="Bertero M.G."/>
            <person name="Bessieres P."/>
            <person name="Bolotin A."/>
            <person name="Borchert S."/>
            <person name="Borriss R."/>
            <person name="Boursier L."/>
            <person name="Brans A."/>
            <person name="Braun M."/>
            <person name="Brignell S.C."/>
            <person name="Bron S."/>
            <person name="Brouillet S."/>
            <person name="Bruschi C.V."/>
            <person name="Caldwell B."/>
            <person name="Capuano V."/>
            <person name="Carter N.M."/>
            <person name="Choi S.-K."/>
            <person name="Codani J.-J."/>
            <person name="Connerton I.F."/>
            <person name="Cummings N.J."/>
            <person name="Daniel R.A."/>
            <person name="Denizot F."/>
            <person name="Devine K.M."/>
            <person name="Duesterhoeft A."/>
            <person name="Ehrlich S.D."/>
            <person name="Emmerson P.T."/>
            <person name="Entian K.-D."/>
            <person name="Errington J."/>
            <person name="Fabret C."/>
            <person name="Ferrari E."/>
            <person name="Foulger D."/>
            <person name="Fritz C."/>
            <person name="Fujita M."/>
            <person name="Fujita Y."/>
            <person name="Fuma S."/>
            <person name="Galizzi A."/>
            <person name="Galleron N."/>
            <person name="Ghim S.-Y."/>
            <person name="Glaser P."/>
            <person name="Goffeau A."/>
            <person name="Golightly E.J."/>
            <person name="Grandi G."/>
            <person name="Guiseppi G."/>
            <person name="Guy B.J."/>
            <person name="Haga K."/>
            <person name="Haiech J."/>
            <person name="Harwood C.R."/>
            <person name="Henaut A."/>
            <person name="Hilbert H."/>
            <person name="Holsappel S."/>
            <person name="Hosono S."/>
            <person name="Hullo M.-F."/>
            <person name="Itaya M."/>
            <person name="Jones L.-M."/>
            <person name="Joris B."/>
            <person name="Karamata D."/>
            <person name="Kasahara Y."/>
            <person name="Klaerr-Blanchard M."/>
            <person name="Klein C."/>
            <person name="Kobayashi Y."/>
            <person name="Koetter P."/>
            <person name="Koningstein G."/>
            <person name="Krogh S."/>
            <person name="Kumano M."/>
            <person name="Kurita K."/>
            <person name="Lapidus A."/>
            <person name="Lardinois S."/>
            <person name="Lauber J."/>
            <person name="Lazarevic V."/>
            <person name="Lee S.-M."/>
            <person name="Levine A."/>
            <person name="Liu H."/>
            <person name="Masuda S."/>
            <person name="Mauel C."/>
            <person name="Medigue C."/>
            <person name="Medina N."/>
            <person name="Mellado R.P."/>
            <person name="Mizuno M."/>
            <person name="Moestl D."/>
            <person name="Nakai S."/>
            <person name="Noback M."/>
            <person name="Noone D."/>
            <person name="O'Reilly M."/>
            <person name="Ogawa K."/>
            <person name="Ogiwara A."/>
            <person name="Oudega B."/>
            <person name="Park S.-H."/>
            <person name="Parro V."/>
            <person name="Pohl T.M."/>
            <person name="Portetelle D."/>
            <person name="Porwollik S."/>
            <person name="Prescott A.M."/>
            <person name="Presecan E."/>
            <person name="Pujic P."/>
            <person name="Purnelle B."/>
            <person name="Rapoport G."/>
            <person name="Rey M."/>
            <person name="Reynolds S."/>
            <person name="Rieger M."/>
            <person name="Rivolta C."/>
            <person name="Rocha E."/>
            <person name="Roche B."/>
            <person name="Rose M."/>
            <person name="Sadaie Y."/>
            <person name="Sato T."/>
            <person name="Scanlan E."/>
            <person name="Schleich S."/>
            <person name="Schroeter R."/>
            <person name="Scoffone F."/>
            <person name="Sekiguchi J."/>
            <person name="Sekowska A."/>
            <person name="Seror S.J."/>
            <person name="Serror P."/>
            <person name="Shin B.-S."/>
            <person name="Soldo B."/>
            <person name="Sorokin A."/>
            <person name="Tacconi E."/>
            <person name="Takagi T."/>
            <person name="Takahashi H."/>
            <person name="Takemaru K."/>
            <person name="Takeuchi M."/>
            <person name="Tamakoshi A."/>
            <person name="Tanaka T."/>
            <person name="Terpstra P."/>
            <person name="Tognoni A."/>
            <person name="Tosato V."/>
            <person name="Uchiyama S."/>
            <person name="Vandenbol M."/>
            <person name="Vannier F."/>
            <person name="Vassarotti A."/>
            <person name="Viari A."/>
            <person name="Wambutt R."/>
            <person name="Wedler E."/>
            <person name="Wedler H."/>
            <person name="Weitzenegger T."/>
            <person name="Winters P."/>
            <person name="Wipat A."/>
            <person name="Yamamoto H."/>
            <person name="Yamane K."/>
            <person name="Yasumoto K."/>
            <person name="Yata K."/>
            <person name="Yoshida K."/>
            <person name="Yoshikawa H.-F."/>
            <person name="Zumstein E."/>
            <person name="Yoshikawa H."/>
            <person name="Danchin A."/>
        </authorList>
    </citation>
    <scope>NUCLEOTIDE SEQUENCE [LARGE SCALE GENOMIC DNA]</scope>
    <source>
        <strain>168</strain>
    </source>
</reference>